<sequence length="92" mass="10498">MTRSLKKNPFVANHLLGKIEKLNMRAEKEIIVTWSRASTIIPIMIGHTIAIHNGKEHLPIYITESMVGHKLGEFAPTLTFRGHARNDKKSRR</sequence>
<gene>
    <name evidence="1" type="primary">rps19</name>
</gene>
<dbReference type="EMBL" id="DQ923117">
    <property type="protein sequence ID" value="ABI49905.1"/>
    <property type="molecule type" value="Genomic_DNA"/>
</dbReference>
<dbReference type="RefSeq" id="YP_740691.1">
    <property type="nucleotide sequence ID" value="NC_008336.1"/>
</dbReference>
<dbReference type="SMR" id="Q09FS0"/>
<dbReference type="GeneID" id="4271669"/>
<dbReference type="GO" id="GO:0009507">
    <property type="term" value="C:chloroplast"/>
    <property type="evidence" value="ECO:0007669"/>
    <property type="project" value="UniProtKB-SubCell"/>
</dbReference>
<dbReference type="GO" id="GO:0005763">
    <property type="term" value="C:mitochondrial small ribosomal subunit"/>
    <property type="evidence" value="ECO:0007669"/>
    <property type="project" value="TreeGrafter"/>
</dbReference>
<dbReference type="GO" id="GO:0019843">
    <property type="term" value="F:rRNA binding"/>
    <property type="evidence" value="ECO:0007669"/>
    <property type="project" value="UniProtKB-UniRule"/>
</dbReference>
<dbReference type="GO" id="GO:0003735">
    <property type="term" value="F:structural constituent of ribosome"/>
    <property type="evidence" value="ECO:0007669"/>
    <property type="project" value="InterPro"/>
</dbReference>
<dbReference type="GO" id="GO:0000028">
    <property type="term" value="P:ribosomal small subunit assembly"/>
    <property type="evidence" value="ECO:0007669"/>
    <property type="project" value="TreeGrafter"/>
</dbReference>
<dbReference type="GO" id="GO:0006412">
    <property type="term" value="P:translation"/>
    <property type="evidence" value="ECO:0007669"/>
    <property type="project" value="UniProtKB-UniRule"/>
</dbReference>
<dbReference type="FunFam" id="3.30.860.10:FF:000001">
    <property type="entry name" value="30S ribosomal protein S19"/>
    <property type="match status" value="1"/>
</dbReference>
<dbReference type="Gene3D" id="3.30.860.10">
    <property type="entry name" value="30s Ribosomal Protein S19, Chain A"/>
    <property type="match status" value="1"/>
</dbReference>
<dbReference type="HAMAP" id="MF_00531">
    <property type="entry name" value="Ribosomal_uS19"/>
    <property type="match status" value="1"/>
</dbReference>
<dbReference type="InterPro" id="IPR002222">
    <property type="entry name" value="Ribosomal_uS19"/>
</dbReference>
<dbReference type="InterPro" id="IPR005732">
    <property type="entry name" value="Ribosomal_uS19_bac-type"/>
</dbReference>
<dbReference type="InterPro" id="IPR020934">
    <property type="entry name" value="Ribosomal_uS19_CS"/>
</dbReference>
<dbReference type="InterPro" id="IPR023575">
    <property type="entry name" value="Ribosomal_uS19_SF"/>
</dbReference>
<dbReference type="NCBIfam" id="TIGR01050">
    <property type="entry name" value="rpsS_bact"/>
    <property type="match status" value="1"/>
</dbReference>
<dbReference type="PANTHER" id="PTHR11880">
    <property type="entry name" value="RIBOSOMAL PROTEIN S19P FAMILY MEMBER"/>
    <property type="match status" value="1"/>
</dbReference>
<dbReference type="PANTHER" id="PTHR11880:SF8">
    <property type="entry name" value="SMALL RIBOSOMAL SUBUNIT PROTEIN US19M"/>
    <property type="match status" value="1"/>
</dbReference>
<dbReference type="Pfam" id="PF00203">
    <property type="entry name" value="Ribosomal_S19"/>
    <property type="match status" value="1"/>
</dbReference>
<dbReference type="PIRSF" id="PIRSF002144">
    <property type="entry name" value="Ribosomal_S19"/>
    <property type="match status" value="1"/>
</dbReference>
<dbReference type="PRINTS" id="PR00975">
    <property type="entry name" value="RIBOSOMALS19"/>
</dbReference>
<dbReference type="SUPFAM" id="SSF54570">
    <property type="entry name" value="Ribosomal protein S19"/>
    <property type="match status" value="1"/>
</dbReference>
<dbReference type="PROSITE" id="PS00323">
    <property type="entry name" value="RIBOSOMAL_S19"/>
    <property type="match status" value="1"/>
</dbReference>
<evidence type="ECO:0000255" key="1">
    <source>
        <dbReference type="HAMAP-Rule" id="MF_00531"/>
    </source>
</evidence>
<evidence type="ECO:0000305" key="2"/>
<protein>
    <recommendedName>
        <fullName evidence="1">Small ribosomal subunit protein uS19c</fullName>
    </recommendedName>
    <alternativeName>
        <fullName evidence="2">30S ribosomal protein S19, chloroplastic</fullName>
    </alternativeName>
</protein>
<name>RR19_NANDO</name>
<keyword id="KW-0150">Chloroplast</keyword>
<keyword id="KW-0934">Plastid</keyword>
<keyword id="KW-0687">Ribonucleoprotein</keyword>
<keyword id="KW-0689">Ribosomal protein</keyword>
<keyword id="KW-0694">RNA-binding</keyword>
<keyword id="KW-0699">rRNA-binding</keyword>
<organism>
    <name type="scientific">Nandina domestica</name>
    <name type="common">Heavenly bamboo</name>
    <dbReference type="NCBI Taxonomy" id="41776"/>
    <lineage>
        <taxon>Eukaryota</taxon>
        <taxon>Viridiplantae</taxon>
        <taxon>Streptophyta</taxon>
        <taxon>Embryophyta</taxon>
        <taxon>Tracheophyta</taxon>
        <taxon>Spermatophyta</taxon>
        <taxon>Magnoliopsida</taxon>
        <taxon>Ranunculales</taxon>
        <taxon>Berberidaceae</taxon>
        <taxon>Nandinoideae</taxon>
        <taxon>Nandineae</taxon>
        <taxon>Nandina</taxon>
    </lineage>
</organism>
<feature type="chain" id="PRO_0000354364" description="Small ribosomal subunit protein uS19c">
    <location>
        <begin position="1"/>
        <end position="92"/>
    </location>
</feature>
<geneLocation type="chloroplast"/>
<accession>Q09FS0</accession>
<proteinExistence type="inferred from homology"/>
<reference key="1">
    <citation type="journal article" date="2006" name="BMC Plant Biol.">
        <title>Rapid and accurate pyrosequencing of angiosperm plastid genomes.</title>
        <authorList>
            <person name="Moore M.J."/>
            <person name="Dhingra A."/>
            <person name="Soltis P.S."/>
            <person name="Shaw R."/>
            <person name="Farmerie W.G."/>
            <person name="Folta K.M."/>
            <person name="Soltis D.E."/>
        </authorList>
    </citation>
    <scope>NUCLEOTIDE SEQUENCE [LARGE SCALE GENOMIC DNA]</scope>
</reference>
<comment type="function">
    <text evidence="1">Protein S19 forms a complex with S13 that binds strongly to the 16S ribosomal RNA.</text>
</comment>
<comment type="subcellular location">
    <subcellularLocation>
        <location>Plastid</location>
        <location>Chloroplast</location>
    </subcellularLocation>
</comment>
<comment type="similarity">
    <text evidence="1">Belongs to the universal ribosomal protein uS19 family.</text>
</comment>